<dbReference type="EC" id="3.1.-.-" evidence="1"/>
<dbReference type="EMBL" id="CP000243">
    <property type="protein sequence ID" value="ABE06157.1"/>
    <property type="molecule type" value="Genomic_DNA"/>
</dbReference>
<dbReference type="RefSeq" id="WP_000084469.1">
    <property type="nucleotide sequence ID" value="NZ_CP064825.1"/>
</dbReference>
<dbReference type="SMR" id="Q1REQ7"/>
<dbReference type="GeneID" id="93776823"/>
<dbReference type="KEGG" id="eci:UTI89_C0657"/>
<dbReference type="HOGENOM" id="CLU_106710_0_1_6"/>
<dbReference type="Proteomes" id="UP000001952">
    <property type="component" value="Chromosome"/>
</dbReference>
<dbReference type="GO" id="GO:0005737">
    <property type="term" value="C:cytoplasm"/>
    <property type="evidence" value="ECO:0007669"/>
    <property type="project" value="UniProtKB-SubCell"/>
</dbReference>
<dbReference type="GO" id="GO:0004222">
    <property type="term" value="F:metalloendopeptidase activity"/>
    <property type="evidence" value="ECO:0007669"/>
    <property type="project" value="InterPro"/>
</dbReference>
<dbReference type="GO" id="GO:0004521">
    <property type="term" value="F:RNA endonuclease activity"/>
    <property type="evidence" value="ECO:0007669"/>
    <property type="project" value="UniProtKB-UniRule"/>
</dbReference>
<dbReference type="GO" id="GO:0008270">
    <property type="term" value="F:zinc ion binding"/>
    <property type="evidence" value="ECO:0007669"/>
    <property type="project" value="UniProtKB-UniRule"/>
</dbReference>
<dbReference type="GO" id="GO:0006364">
    <property type="term" value="P:rRNA processing"/>
    <property type="evidence" value="ECO:0007669"/>
    <property type="project" value="UniProtKB-UniRule"/>
</dbReference>
<dbReference type="FunFam" id="3.40.390.30:FF:000001">
    <property type="entry name" value="Endoribonuclease YbeY"/>
    <property type="match status" value="1"/>
</dbReference>
<dbReference type="Gene3D" id="3.40.390.30">
    <property type="entry name" value="Metalloproteases ('zincins'), catalytic domain"/>
    <property type="match status" value="1"/>
</dbReference>
<dbReference type="HAMAP" id="MF_00009">
    <property type="entry name" value="Endoribonucl_YbeY"/>
    <property type="match status" value="1"/>
</dbReference>
<dbReference type="InterPro" id="IPR023091">
    <property type="entry name" value="MetalPrtase_cat_dom_sf_prd"/>
</dbReference>
<dbReference type="InterPro" id="IPR002036">
    <property type="entry name" value="YbeY"/>
</dbReference>
<dbReference type="InterPro" id="IPR020549">
    <property type="entry name" value="YbeY_CS"/>
</dbReference>
<dbReference type="NCBIfam" id="TIGR00043">
    <property type="entry name" value="rRNA maturation RNase YbeY"/>
    <property type="match status" value="1"/>
</dbReference>
<dbReference type="PANTHER" id="PTHR46986">
    <property type="entry name" value="ENDORIBONUCLEASE YBEY, CHLOROPLASTIC"/>
    <property type="match status" value="1"/>
</dbReference>
<dbReference type="PANTHER" id="PTHR46986:SF1">
    <property type="entry name" value="ENDORIBONUCLEASE YBEY, CHLOROPLASTIC"/>
    <property type="match status" value="1"/>
</dbReference>
<dbReference type="Pfam" id="PF02130">
    <property type="entry name" value="YbeY"/>
    <property type="match status" value="1"/>
</dbReference>
<dbReference type="SUPFAM" id="SSF55486">
    <property type="entry name" value="Metalloproteases ('zincins'), catalytic domain"/>
    <property type="match status" value="1"/>
</dbReference>
<dbReference type="PROSITE" id="PS01306">
    <property type="entry name" value="UPF0054"/>
    <property type="match status" value="1"/>
</dbReference>
<feature type="chain" id="PRO_0000284204" description="Endoribonuclease YbeY">
    <location>
        <begin position="1"/>
        <end position="155"/>
    </location>
</feature>
<feature type="binding site" evidence="1">
    <location>
        <position position="114"/>
    </location>
    <ligand>
        <name>Zn(2+)</name>
        <dbReference type="ChEBI" id="CHEBI:29105"/>
        <note>catalytic</note>
    </ligand>
</feature>
<feature type="binding site" evidence="1">
    <location>
        <position position="118"/>
    </location>
    <ligand>
        <name>Zn(2+)</name>
        <dbReference type="ChEBI" id="CHEBI:29105"/>
        <note>catalytic</note>
    </ligand>
</feature>
<feature type="binding site" evidence="1">
    <location>
        <position position="124"/>
    </location>
    <ligand>
        <name>Zn(2+)</name>
        <dbReference type="ChEBI" id="CHEBI:29105"/>
        <note>catalytic</note>
    </ligand>
</feature>
<sequence>MSQVILDLQLACEDNSGLPEESQFQTWLNAVIPQFQEESEVTIRVVDTAESHSLNLTYRGKDKPTNVLSFPFEVPPGMEMSLLGDLVICRQVVEKEAQEQGKPLEAHWAHMVVHGSLHLLGYDHIEDDEAEEMEALETEIMLALGYEDPYIAEKE</sequence>
<reference key="1">
    <citation type="journal article" date="2006" name="Proc. Natl. Acad. Sci. U.S.A.">
        <title>Identification of genes subject to positive selection in uropathogenic strains of Escherichia coli: a comparative genomics approach.</title>
        <authorList>
            <person name="Chen S.L."/>
            <person name="Hung C.-S."/>
            <person name="Xu J."/>
            <person name="Reigstad C.S."/>
            <person name="Magrini V."/>
            <person name="Sabo A."/>
            <person name="Blasiar D."/>
            <person name="Bieri T."/>
            <person name="Meyer R.R."/>
            <person name="Ozersky P."/>
            <person name="Armstrong J.R."/>
            <person name="Fulton R.S."/>
            <person name="Latreille J.P."/>
            <person name="Spieth J."/>
            <person name="Hooton T.M."/>
            <person name="Mardis E.R."/>
            <person name="Hultgren S.J."/>
            <person name="Gordon J.I."/>
        </authorList>
    </citation>
    <scope>NUCLEOTIDE SEQUENCE [LARGE SCALE GENOMIC DNA]</scope>
    <source>
        <strain>UTI89 / UPEC</strain>
    </source>
</reference>
<accession>Q1REQ7</accession>
<gene>
    <name evidence="1" type="primary">ybeY</name>
    <name type="ordered locus">UTI89_C0657</name>
</gene>
<protein>
    <recommendedName>
        <fullName evidence="1">Endoribonuclease YbeY</fullName>
        <ecNumber evidence="1">3.1.-.-</ecNumber>
    </recommendedName>
</protein>
<organism>
    <name type="scientific">Escherichia coli (strain UTI89 / UPEC)</name>
    <dbReference type="NCBI Taxonomy" id="364106"/>
    <lineage>
        <taxon>Bacteria</taxon>
        <taxon>Pseudomonadati</taxon>
        <taxon>Pseudomonadota</taxon>
        <taxon>Gammaproteobacteria</taxon>
        <taxon>Enterobacterales</taxon>
        <taxon>Enterobacteriaceae</taxon>
        <taxon>Escherichia</taxon>
    </lineage>
</organism>
<comment type="function">
    <text evidence="1">Single strand-specific metallo-endoribonuclease involved in late-stage 70S ribosome quality control and in maturation of the 3' terminus of the 16S rRNA.</text>
</comment>
<comment type="cofactor">
    <cofactor evidence="1">
        <name>Zn(2+)</name>
        <dbReference type="ChEBI" id="CHEBI:29105"/>
    </cofactor>
    <text evidence="1">Binds 1 zinc ion.</text>
</comment>
<comment type="subcellular location">
    <subcellularLocation>
        <location evidence="1">Cytoplasm</location>
    </subcellularLocation>
</comment>
<comment type="similarity">
    <text evidence="1">Belongs to the endoribonuclease YbeY family.</text>
</comment>
<name>YBEY_ECOUT</name>
<evidence type="ECO:0000255" key="1">
    <source>
        <dbReference type="HAMAP-Rule" id="MF_00009"/>
    </source>
</evidence>
<keyword id="KW-0963">Cytoplasm</keyword>
<keyword id="KW-0255">Endonuclease</keyword>
<keyword id="KW-0378">Hydrolase</keyword>
<keyword id="KW-0479">Metal-binding</keyword>
<keyword id="KW-0540">Nuclease</keyword>
<keyword id="KW-0690">Ribosome biogenesis</keyword>
<keyword id="KW-0698">rRNA processing</keyword>
<keyword id="KW-0862">Zinc</keyword>
<proteinExistence type="inferred from homology"/>